<dbReference type="EC" id="3.1.2.6" evidence="1"/>
<dbReference type="EMBL" id="AL590842">
    <property type="protein sequence ID" value="CAL19745.1"/>
    <property type="molecule type" value="Genomic_DNA"/>
</dbReference>
<dbReference type="EMBL" id="AE009952">
    <property type="protein sequence ID" value="AAM86647.1"/>
    <property type="status" value="ALT_INIT"/>
    <property type="molecule type" value="Genomic_DNA"/>
</dbReference>
<dbReference type="EMBL" id="AE017042">
    <property type="protein sequence ID" value="AAS62954.1"/>
    <property type="status" value="ALT_INIT"/>
    <property type="molecule type" value="Genomic_DNA"/>
</dbReference>
<dbReference type="PIR" id="AG0132">
    <property type="entry name" value="AG0132"/>
</dbReference>
<dbReference type="RefSeq" id="WP_002210697.1">
    <property type="nucleotide sequence ID" value="NZ_WUCM01000115.1"/>
</dbReference>
<dbReference type="RefSeq" id="YP_002346123.1">
    <property type="nucleotide sequence ID" value="NC_003143.1"/>
</dbReference>
<dbReference type="SMR" id="Q0WHW5"/>
<dbReference type="STRING" id="214092.YPO1079"/>
<dbReference type="PaxDb" id="214092-YPO1079"/>
<dbReference type="DNASU" id="1148044"/>
<dbReference type="EnsemblBacteria" id="AAS62954">
    <property type="protein sequence ID" value="AAS62954"/>
    <property type="gene ID" value="YP_2770"/>
</dbReference>
<dbReference type="GeneID" id="57977477"/>
<dbReference type="KEGG" id="ype:YPO1079"/>
<dbReference type="KEGG" id="ypk:y3097"/>
<dbReference type="KEGG" id="ypm:YP_2770"/>
<dbReference type="PATRIC" id="fig|214092.21.peg.1370"/>
<dbReference type="eggNOG" id="COG0491">
    <property type="taxonomic scope" value="Bacteria"/>
</dbReference>
<dbReference type="HOGENOM" id="CLU_030571_4_1_6"/>
<dbReference type="OMA" id="NYIWLLQ"/>
<dbReference type="OrthoDB" id="9802248at2"/>
<dbReference type="UniPathway" id="UPA00619">
    <property type="reaction ID" value="UER00676"/>
</dbReference>
<dbReference type="Proteomes" id="UP000000815">
    <property type="component" value="Chromosome"/>
</dbReference>
<dbReference type="Proteomes" id="UP000001019">
    <property type="component" value="Chromosome"/>
</dbReference>
<dbReference type="Proteomes" id="UP000002490">
    <property type="component" value="Chromosome"/>
</dbReference>
<dbReference type="GO" id="GO:0004416">
    <property type="term" value="F:hydroxyacylglutathione hydrolase activity"/>
    <property type="evidence" value="ECO:0007669"/>
    <property type="project" value="UniProtKB-UniRule"/>
</dbReference>
<dbReference type="GO" id="GO:0046872">
    <property type="term" value="F:metal ion binding"/>
    <property type="evidence" value="ECO:0007669"/>
    <property type="project" value="UniProtKB-KW"/>
</dbReference>
<dbReference type="GO" id="GO:0019243">
    <property type="term" value="P:methylglyoxal catabolic process to D-lactate via S-lactoyl-glutathione"/>
    <property type="evidence" value="ECO:0007669"/>
    <property type="project" value="InterPro"/>
</dbReference>
<dbReference type="CDD" id="cd07723">
    <property type="entry name" value="hydroxyacylglutathione_hydrolase_MBL-fold"/>
    <property type="match status" value="1"/>
</dbReference>
<dbReference type="Gene3D" id="3.60.15.10">
    <property type="entry name" value="Ribonuclease Z/Hydroxyacylglutathione hydrolase-like"/>
    <property type="match status" value="1"/>
</dbReference>
<dbReference type="HAMAP" id="MF_01374">
    <property type="entry name" value="Glyoxalase_2"/>
    <property type="match status" value="1"/>
</dbReference>
<dbReference type="InterPro" id="IPR035680">
    <property type="entry name" value="Clx_II_MBL"/>
</dbReference>
<dbReference type="InterPro" id="IPR050110">
    <property type="entry name" value="Glyoxalase_II_hydrolase"/>
</dbReference>
<dbReference type="InterPro" id="IPR032282">
    <property type="entry name" value="HAGH_C"/>
</dbReference>
<dbReference type="InterPro" id="IPR017782">
    <property type="entry name" value="Hydroxyacylglutathione_Hdrlase"/>
</dbReference>
<dbReference type="InterPro" id="IPR001279">
    <property type="entry name" value="Metallo-B-lactamas"/>
</dbReference>
<dbReference type="InterPro" id="IPR036866">
    <property type="entry name" value="RibonucZ/Hydroxyglut_hydro"/>
</dbReference>
<dbReference type="NCBIfam" id="TIGR03413">
    <property type="entry name" value="GSH_gloB"/>
    <property type="match status" value="1"/>
</dbReference>
<dbReference type="PANTHER" id="PTHR43705">
    <property type="entry name" value="HYDROXYACYLGLUTATHIONE HYDROLASE"/>
    <property type="match status" value="1"/>
</dbReference>
<dbReference type="PANTHER" id="PTHR43705:SF1">
    <property type="entry name" value="HYDROXYACYLGLUTATHIONE HYDROLASE GLOB"/>
    <property type="match status" value="1"/>
</dbReference>
<dbReference type="Pfam" id="PF16123">
    <property type="entry name" value="HAGH_C"/>
    <property type="match status" value="1"/>
</dbReference>
<dbReference type="Pfam" id="PF00753">
    <property type="entry name" value="Lactamase_B"/>
    <property type="match status" value="1"/>
</dbReference>
<dbReference type="PIRSF" id="PIRSF005457">
    <property type="entry name" value="Glx"/>
    <property type="match status" value="1"/>
</dbReference>
<dbReference type="SMART" id="SM00849">
    <property type="entry name" value="Lactamase_B"/>
    <property type="match status" value="1"/>
</dbReference>
<dbReference type="SUPFAM" id="SSF56281">
    <property type="entry name" value="Metallo-hydrolase/oxidoreductase"/>
    <property type="match status" value="1"/>
</dbReference>
<reference key="1">
    <citation type="journal article" date="2001" name="Nature">
        <title>Genome sequence of Yersinia pestis, the causative agent of plague.</title>
        <authorList>
            <person name="Parkhill J."/>
            <person name="Wren B.W."/>
            <person name="Thomson N.R."/>
            <person name="Titball R.W."/>
            <person name="Holden M.T.G."/>
            <person name="Prentice M.B."/>
            <person name="Sebaihia M."/>
            <person name="James K.D."/>
            <person name="Churcher C.M."/>
            <person name="Mungall K.L."/>
            <person name="Baker S."/>
            <person name="Basham D."/>
            <person name="Bentley S.D."/>
            <person name="Brooks K."/>
            <person name="Cerdeno-Tarraga A.-M."/>
            <person name="Chillingworth T."/>
            <person name="Cronin A."/>
            <person name="Davies R.M."/>
            <person name="Davis P."/>
            <person name="Dougan G."/>
            <person name="Feltwell T."/>
            <person name="Hamlin N."/>
            <person name="Holroyd S."/>
            <person name="Jagels K."/>
            <person name="Karlyshev A.V."/>
            <person name="Leather S."/>
            <person name="Moule S."/>
            <person name="Oyston P.C.F."/>
            <person name="Quail M.A."/>
            <person name="Rutherford K.M."/>
            <person name="Simmonds M."/>
            <person name="Skelton J."/>
            <person name="Stevens K."/>
            <person name="Whitehead S."/>
            <person name="Barrell B.G."/>
        </authorList>
    </citation>
    <scope>NUCLEOTIDE SEQUENCE [LARGE SCALE GENOMIC DNA]</scope>
    <source>
        <strain>CO-92 / Biovar Orientalis</strain>
    </source>
</reference>
<reference key="2">
    <citation type="journal article" date="2002" name="J. Bacteriol.">
        <title>Genome sequence of Yersinia pestis KIM.</title>
        <authorList>
            <person name="Deng W."/>
            <person name="Burland V."/>
            <person name="Plunkett G. III"/>
            <person name="Boutin A."/>
            <person name="Mayhew G.F."/>
            <person name="Liss P."/>
            <person name="Perna N.T."/>
            <person name="Rose D.J."/>
            <person name="Mau B."/>
            <person name="Zhou S."/>
            <person name="Schwartz D.C."/>
            <person name="Fetherston J.D."/>
            <person name="Lindler L.E."/>
            <person name="Brubaker R.R."/>
            <person name="Plano G.V."/>
            <person name="Straley S.C."/>
            <person name="McDonough K.A."/>
            <person name="Nilles M.L."/>
            <person name="Matson J.S."/>
            <person name="Blattner F.R."/>
            <person name="Perry R.D."/>
        </authorList>
    </citation>
    <scope>NUCLEOTIDE SEQUENCE [LARGE SCALE GENOMIC DNA]</scope>
    <source>
        <strain>KIM10+ / Biovar Mediaevalis</strain>
    </source>
</reference>
<reference key="3">
    <citation type="journal article" date="2004" name="DNA Res.">
        <title>Complete genome sequence of Yersinia pestis strain 91001, an isolate avirulent to humans.</title>
        <authorList>
            <person name="Song Y."/>
            <person name="Tong Z."/>
            <person name="Wang J."/>
            <person name="Wang L."/>
            <person name="Guo Z."/>
            <person name="Han Y."/>
            <person name="Zhang J."/>
            <person name="Pei D."/>
            <person name="Zhou D."/>
            <person name="Qin H."/>
            <person name="Pang X."/>
            <person name="Han Y."/>
            <person name="Zhai J."/>
            <person name="Li M."/>
            <person name="Cui B."/>
            <person name="Qi Z."/>
            <person name="Jin L."/>
            <person name="Dai R."/>
            <person name="Chen F."/>
            <person name="Li S."/>
            <person name="Ye C."/>
            <person name="Du Z."/>
            <person name="Lin W."/>
            <person name="Wang J."/>
            <person name="Yu J."/>
            <person name="Yang H."/>
            <person name="Wang J."/>
            <person name="Huang P."/>
            <person name="Yang R."/>
        </authorList>
    </citation>
    <scope>NUCLEOTIDE SEQUENCE [LARGE SCALE GENOMIC DNA]</scope>
    <source>
        <strain>91001 / Biovar Mediaevalis</strain>
    </source>
</reference>
<feature type="chain" id="PRO_0000309727" description="Hydroxyacylglutathione hydrolase">
    <location>
        <begin position="1"/>
        <end position="251"/>
    </location>
</feature>
<feature type="binding site" evidence="1">
    <location>
        <position position="53"/>
    </location>
    <ligand>
        <name>Zn(2+)</name>
        <dbReference type="ChEBI" id="CHEBI:29105"/>
        <label>1</label>
    </ligand>
</feature>
<feature type="binding site" evidence="1">
    <location>
        <position position="55"/>
    </location>
    <ligand>
        <name>Zn(2+)</name>
        <dbReference type="ChEBI" id="CHEBI:29105"/>
        <label>1</label>
    </ligand>
</feature>
<feature type="binding site" evidence="1">
    <location>
        <position position="57"/>
    </location>
    <ligand>
        <name>Zn(2+)</name>
        <dbReference type="ChEBI" id="CHEBI:29105"/>
        <label>2</label>
    </ligand>
</feature>
<feature type="binding site" evidence="1">
    <location>
        <position position="58"/>
    </location>
    <ligand>
        <name>Zn(2+)</name>
        <dbReference type="ChEBI" id="CHEBI:29105"/>
        <label>2</label>
    </ligand>
</feature>
<feature type="binding site" evidence="1">
    <location>
        <position position="110"/>
    </location>
    <ligand>
        <name>Zn(2+)</name>
        <dbReference type="ChEBI" id="CHEBI:29105"/>
        <label>1</label>
    </ligand>
</feature>
<feature type="binding site" evidence="1">
    <location>
        <position position="127"/>
    </location>
    <ligand>
        <name>Zn(2+)</name>
        <dbReference type="ChEBI" id="CHEBI:29105"/>
        <label>1</label>
    </ligand>
</feature>
<feature type="binding site" evidence="1">
    <location>
        <position position="127"/>
    </location>
    <ligand>
        <name>Zn(2+)</name>
        <dbReference type="ChEBI" id="CHEBI:29105"/>
        <label>2</label>
    </ligand>
</feature>
<feature type="binding site" evidence="1">
    <location>
        <position position="165"/>
    </location>
    <ligand>
        <name>Zn(2+)</name>
        <dbReference type="ChEBI" id="CHEBI:29105"/>
        <label>2</label>
    </ligand>
</feature>
<gene>
    <name evidence="1" type="primary">gloB</name>
    <name type="ordered locus">YPO1079</name>
    <name type="ordered locus">y3097</name>
    <name type="ordered locus">YP_2770</name>
</gene>
<evidence type="ECO:0000255" key="1">
    <source>
        <dbReference type="HAMAP-Rule" id="MF_01374"/>
    </source>
</evidence>
<evidence type="ECO:0000305" key="2"/>
<accession>Q0WHW5</accession>
<accession>Q74S65</accession>
<accession>Q8CZZ3</accession>
<keyword id="KW-0378">Hydrolase</keyword>
<keyword id="KW-0479">Metal-binding</keyword>
<keyword id="KW-1185">Reference proteome</keyword>
<keyword id="KW-0862">Zinc</keyword>
<organism>
    <name type="scientific">Yersinia pestis</name>
    <dbReference type="NCBI Taxonomy" id="632"/>
    <lineage>
        <taxon>Bacteria</taxon>
        <taxon>Pseudomonadati</taxon>
        <taxon>Pseudomonadota</taxon>
        <taxon>Gammaproteobacteria</taxon>
        <taxon>Enterobacterales</taxon>
        <taxon>Yersiniaceae</taxon>
        <taxon>Yersinia</taxon>
    </lineage>
</organism>
<proteinExistence type="inferred from homology"/>
<sequence>MNLISIPAFQDNYIWLLANRQKHCVIVDPGESAPVLATLAQGQYVPQAILLTHHHNDHVGGVADLRHHFPDIPVYGPQETAKKGATVIVNDGDSLTIAGQNYTIIAVPGHTLGHIAYYSSPYLFCGDTLFSAGCGRLLEGTPEQMYASIQRLAQLPDETLICCAHEYTLSNLKFAHAILPADQDIATYQQQIEQLRSKNLPSLPVKLQFERKINVFLRCNDIDLQRKIGTTSPPDSLVSVFCELRSRKDSF</sequence>
<name>GLO2_YERPE</name>
<protein>
    <recommendedName>
        <fullName evidence="1">Hydroxyacylglutathione hydrolase</fullName>
        <ecNumber evidence="1">3.1.2.6</ecNumber>
    </recommendedName>
    <alternativeName>
        <fullName evidence="1">Glyoxalase II</fullName>
        <shortName evidence="1">Glx II</shortName>
    </alternativeName>
</protein>
<comment type="function">
    <text evidence="1">Thiolesterase that catalyzes the hydrolysis of S-D-lactoyl-glutathione to form glutathione and D-lactic acid.</text>
</comment>
<comment type="catalytic activity">
    <reaction evidence="1">
        <text>an S-(2-hydroxyacyl)glutathione + H2O = a 2-hydroxy carboxylate + glutathione + H(+)</text>
        <dbReference type="Rhea" id="RHEA:21864"/>
        <dbReference type="ChEBI" id="CHEBI:15377"/>
        <dbReference type="ChEBI" id="CHEBI:15378"/>
        <dbReference type="ChEBI" id="CHEBI:57925"/>
        <dbReference type="ChEBI" id="CHEBI:58896"/>
        <dbReference type="ChEBI" id="CHEBI:71261"/>
        <dbReference type="EC" id="3.1.2.6"/>
    </reaction>
</comment>
<comment type="cofactor">
    <cofactor evidence="1">
        <name>Zn(2+)</name>
        <dbReference type="ChEBI" id="CHEBI:29105"/>
    </cofactor>
    <text evidence="1">Binds 2 Zn(2+) ions per subunit.</text>
</comment>
<comment type="pathway">
    <text evidence="1">Secondary metabolite metabolism; methylglyoxal degradation; (R)-lactate from methylglyoxal: step 2/2.</text>
</comment>
<comment type="subunit">
    <text evidence="1">Monomer.</text>
</comment>
<comment type="similarity">
    <text evidence="1">Belongs to the metallo-beta-lactamase superfamily. Glyoxalase II family.</text>
</comment>
<comment type="sequence caution" evidence="2">
    <conflict type="erroneous initiation">
        <sequence resource="EMBL-CDS" id="AAM86647"/>
    </conflict>
</comment>
<comment type="sequence caution" evidence="2">
    <conflict type="erroneous initiation">
        <sequence resource="EMBL-CDS" id="AAS62954"/>
    </conflict>
</comment>